<proteinExistence type="inferred from homology"/>
<gene>
    <name evidence="1" type="primary">recF</name>
    <name type="ordered locus">A1I_00180</name>
</gene>
<feature type="chain" id="PRO_1000121144" description="DNA replication and repair protein RecF">
    <location>
        <begin position="1"/>
        <end position="360"/>
    </location>
</feature>
<feature type="binding site" evidence="1">
    <location>
        <begin position="33"/>
        <end position="40"/>
    </location>
    <ligand>
        <name>ATP</name>
        <dbReference type="ChEBI" id="CHEBI:30616"/>
    </ligand>
</feature>
<evidence type="ECO:0000255" key="1">
    <source>
        <dbReference type="HAMAP-Rule" id="MF_00365"/>
    </source>
</evidence>
<organism>
    <name type="scientific">Rickettsia bellii (strain OSU 85-389)</name>
    <dbReference type="NCBI Taxonomy" id="391896"/>
    <lineage>
        <taxon>Bacteria</taxon>
        <taxon>Pseudomonadati</taxon>
        <taxon>Pseudomonadota</taxon>
        <taxon>Alphaproteobacteria</taxon>
        <taxon>Rickettsiales</taxon>
        <taxon>Rickettsiaceae</taxon>
        <taxon>Rickettsieae</taxon>
        <taxon>Rickettsia</taxon>
        <taxon>belli group</taxon>
    </lineage>
</organism>
<comment type="function">
    <text evidence="1">The RecF protein is involved in DNA metabolism; it is required for DNA replication and normal SOS inducibility. RecF binds preferentially to single-stranded, linear DNA. It also seems to bind ATP.</text>
</comment>
<comment type="subcellular location">
    <subcellularLocation>
        <location evidence="1">Cytoplasm</location>
    </subcellularLocation>
</comment>
<comment type="similarity">
    <text evidence="1">Belongs to the RecF family.</text>
</comment>
<keyword id="KW-0067">ATP-binding</keyword>
<keyword id="KW-0963">Cytoplasm</keyword>
<keyword id="KW-0227">DNA damage</keyword>
<keyword id="KW-0234">DNA repair</keyword>
<keyword id="KW-0235">DNA replication</keyword>
<keyword id="KW-0238">DNA-binding</keyword>
<keyword id="KW-0547">Nucleotide-binding</keyword>
<keyword id="KW-0742">SOS response</keyword>
<sequence length="360" mass="41609">MKNIFLHSLIVENYRNFKNLELKTDNIPITIIGENGSGKTNILEAISLFYPGRGLRSARLADICRESEDHCSVRALLQSKLGLAEFSTQIKRISNRRTTEYNNSKIANNELSKFTSMVWLTPQMEGIFMSGTSDRRKFFDRIVYNFDPKHAELVSKYEHYMQERNKILAEDMWDNNWLKTIEEKMADTSIYIANNRLKTLEFMQQAIDDLENEFPKAELSIDGMVEQKILNGEEDVVGFIAAELHKTRDKDKLLGRTSFGVHKSDFLVKHKHKNILAKFCSTGEQKAILIAIILAEMNYAIKLTKTAPILLLDEVFVHLDDRRRNYLTEFFISINLQLWVTATDLKGIEEFGNKSQLIKL</sequence>
<accession>A8GUF0</accession>
<name>RECF_RICB8</name>
<protein>
    <recommendedName>
        <fullName evidence="1">DNA replication and repair protein RecF</fullName>
    </recommendedName>
</protein>
<reference key="1">
    <citation type="submission" date="2007-09" db="EMBL/GenBank/DDBJ databases">
        <title>Complete genome sequencing of Rickettsia bellii.</title>
        <authorList>
            <person name="Madan A."/>
            <person name="Lee H."/>
            <person name="Madan A."/>
            <person name="Yoon J.-G."/>
            <person name="Ryu G.-Y."/>
            <person name="Dasch G."/>
            <person name="Ereemeva M."/>
        </authorList>
    </citation>
    <scope>NUCLEOTIDE SEQUENCE [LARGE SCALE GENOMIC DNA]</scope>
    <source>
        <strain>OSU 85-389</strain>
    </source>
</reference>
<dbReference type="EMBL" id="CP000849">
    <property type="protein sequence ID" value="ABV78446.1"/>
    <property type="molecule type" value="Genomic_DNA"/>
</dbReference>
<dbReference type="RefSeq" id="WP_012151492.1">
    <property type="nucleotide sequence ID" value="NC_009883.1"/>
</dbReference>
<dbReference type="SMR" id="A8GUF0"/>
<dbReference type="KEGG" id="rbo:A1I_00180"/>
<dbReference type="HOGENOM" id="CLU_040267_2_0_5"/>
<dbReference type="GO" id="GO:0005737">
    <property type="term" value="C:cytoplasm"/>
    <property type="evidence" value="ECO:0007669"/>
    <property type="project" value="UniProtKB-SubCell"/>
</dbReference>
<dbReference type="GO" id="GO:0005524">
    <property type="term" value="F:ATP binding"/>
    <property type="evidence" value="ECO:0007669"/>
    <property type="project" value="UniProtKB-UniRule"/>
</dbReference>
<dbReference type="GO" id="GO:0003697">
    <property type="term" value="F:single-stranded DNA binding"/>
    <property type="evidence" value="ECO:0007669"/>
    <property type="project" value="UniProtKB-UniRule"/>
</dbReference>
<dbReference type="GO" id="GO:0006260">
    <property type="term" value="P:DNA replication"/>
    <property type="evidence" value="ECO:0007669"/>
    <property type="project" value="UniProtKB-UniRule"/>
</dbReference>
<dbReference type="GO" id="GO:0000731">
    <property type="term" value="P:DNA synthesis involved in DNA repair"/>
    <property type="evidence" value="ECO:0007669"/>
    <property type="project" value="TreeGrafter"/>
</dbReference>
<dbReference type="GO" id="GO:0006302">
    <property type="term" value="P:double-strand break repair"/>
    <property type="evidence" value="ECO:0007669"/>
    <property type="project" value="TreeGrafter"/>
</dbReference>
<dbReference type="GO" id="GO:0009432">
    <property type="term" value="P:SOS response"/>
    <property type="evidence" value="ECO:0007669"/>
    <property type="project" value="UniProtKB-UniRule"/>
</dbReference>
<dbReference type="Gene3D" id="3.40.50.300">
    <property type="entry name" value="P-loop containing nucleotide triphosphate hydrolases"/>
    <property type="match status" value="1"/>
</dbReference>
<dbReference type="Gene3D" id="1.20.1050.90">
    <property type="entry name" value="RecF/RecN/SMC, N-terminal domain"/>
    <property type="match status" value="1"/>
</dbReference>
<dbReference type="HAMAP" id="MF_00365">
    <property type="entry name" value="RecF"/>
    <property type="match status" value="1"/>
</dbReference>
<dbReference type="InterPro" id="IPR001238">
    <property type="entry name" value="DNA-binding_RecF"/>
</dbReference>
<dbReference type="InterPro" id="IPR018078">
    <property type="entry name" value="DNA-binding_RecF_CS"/>
</dbReference>
<dbReference type="InterPro" id="IPR027417">
    <property type="entry name" value="P-loop_NTPase"/>
</dbReference>
<dbReference type="InterPro" id="IPR003395">
    <property type="entry name" value="RecF/RecN/SMC_N"/>
</dbReference>
<dbReference type="InterPro" id="IPR042174">
    <property type="entry name" value="RecF_2"/>
</dbReference>
<dbReference type="NCBIfam" id="TIGR00611">
    <property type="entry name" value="recf"/>
    <property type="match status" value="1"/>
</dbReference>
<dbReference type="PANTHER" id="PTHR32182">
    <property type="entry name" value="DNA REPLICATION AND REPAIR PROTEIN RECF"/>
    <property type="match status" value="1"/>
</dbReference>
<dbReference type="PANTHER" id="PTHR32182:SF0">
    <property type="entry name" value="DNA REPLICATION AND REPAIR PROTEIN RECF"/>
    <property type="match status" value="1"/>
</dbReference>
<dbReference type="Pfam" id="PF02463">
    <property type="entry name" value="SMC_N"/>
    <property type="match status" value="1"/>
</dbReference>
<dbReference type="SUPFAM" id="SSF52540">
    <property type="entry name" value="P-loop containing nucleoside triphosphate hydrolases"/>
    <property type="match status" value="1"/>
</dbReference>
<dbReference type="PROSITE" id="PS00618">
    <property type="entry name" value="RECF_2"/>
    <property type="match status" value="1"/>
</dbReference>